<evidence type="ECO:0000255" key="1">
    <source>
        <dbReference type="HAMAP-Rule" id="MF_00503"/>
    </source>
</evidence>
<evidence type="ECO:0000305" key="2"/>
<feature type="chain" id="PRO_0000176656" description="Large ribosomal subunit protein bL9">
    <location>
        <begin position="1"/>
        <end position="152"/>
    </location>
</feature>
<name>RL9_MYCBO</name>
<comment type="function">
    <text evidence="1">Binds to the 23S rRNA.</text>
</comment>
<comment type="similarity">
    <text evidence="1">Belongs to the bacterial ribosomal protein bL9 family.</text>
</comment>
<protein>
    <recommendedName>
        <fullName evidence="1">Large ribosomal subunit protein bL9</fullName>
    </recommendedName>
    <alternativeName>
        <fullName evidence="2">50S ribosomal protein L9</fullName>
    </alternativeName>
</protein>
<gene>
    <name evidence="1" type="primary">rplI</name>
    <name type="ordered locus">BQ2027_MB0057</name>
</gene>
<organism>
    <name type="scientific">Mycobacterium bovis (strain ATCC BAA-935 / AF2122/97)</name>
    <dbReference type="NCBI Taxonomy" id="233413"/>
    <lineage>
        <taxon>Bacteria</taxon>
        <taxon>Bacillati</taxon>
        <taxon>Actinomycetota</taxon>
        <taxon>Actinomycetes</taxon>
        <taxon>Mycobacteriales</taxon>
        <taxon>Mycobacteriaceae</taxon>
        <taxon>Mycobacterium</taxon>
        <taxon>Mycobacterium tuberculosis complex</taxon>
    </lineage>
</organism>
<accession>P66316</accession>
<accession>A0A1R3XU65</accession>
<accession>P71713</accession>
<accession>X2BDW5</accession>
<sequence length="152" mass="16170">MKLILTADVDHLGSIGDTVEVKDGYGRNFLLPRGLAIVASRGAQKQADEIRRARETKSVRDLEHANEIKAAIEALGPIALPVKTSADSGKLFGSVTAADVVAAIKKAGGPNLDKRIVRLPKTHIKAVGTHFVSVHLHPEIDVEVSLDVVAQS</sequence>
<keyword id="KW-1185">Reference proteome</keyword>
<keyword id="KW-0687">Ribonucleoprotein</keyword>
<keyword id="KW-0689">Ribosomal protein</keyword>
<keyword id="KW-0694">RNA-binding</keyword>
<keyword id="KW-0699">rRNA-binding</keyword>
<proteinExistence type="inferred from homology"/>
<dbReference type="EMBL" id="LT708304">
    <property type="protein sequence ID" value="SIT98427.1"/>
    <property type="molecule type" value="Genomic_DNA"/>
</dbReference>
<dbReference type="RefSeq" id="NP_853726.1">
    <property type="nucleotide sequence ID" value="NC_002945.3"/>
</dbReference>
<dbReference type="RefSeq" id="WP_003400543.1">
    <property type="nucleotide sequence ID" value="NC_002945.4"/>
</dbReference>
<dbReference type="SMR" id="P66316"/>
<dbReference type="GeneID" id="45424015"/>
<dbReference type="KEGG" id="mbo:BQ2027_MB0057"/>
<dbReference type="PATRIC" id="fig|233413.5.peg.63"/>
<dbReference type="Proteomes" id="UP000001419">
    <property type="component" value="Chromosome"/>
</dbReference>
<dbReference type="GO" id="GO:1990904">
    <property type="term" value="C:ribonucleoprotein complex"/>
    <property type="evidence" value="ECO:0007669"/>
    <property type="project" value="UniProtKB-KW"/>
</dbReference>
<dbReference type="GO" id="GO:0005840">
    <property type="term" value="C:ribosome"/>
    <property type="evidence" value="ECO:0007669"/>
    <property type="project" value="UniProtKB-KW"/>
</dbReference>
<dbReference type="GO" id="GO:0019843">
    <property type="term" value="F:rRNA binding"/>
    <property type="evidence" value="ECO:0007669"/>
    <property type="project" value="UniProtKB-UniRule"/>
</dbReference>
<dbReference type="GO" id="GO:0003735">
    <property type="term" value="F:structural constituent of ribosome"/>
    <property type="evidence" value="ECO:0007669"/>
    <property type="project" value="InterPro"/>
</dbReference>
<dbReference type="GO" id="GO:0006412">
    <property type="term" value="P:translation"/>
    <property type="evidence" value="ECO:0007669"/>
    <property type="project" value="UniProtKB-UniRule"/>
</dbReference>
<dbReference type="FunFam" id="3.10.430.100:FF:000006">
    <property type="entry name" value="50S ribosomal protein L9"/>
    <property type="match status" value="1"/>
</dbReference>
<dbReference type="FunFam" id="3.40.5.10:FF:000003">
    <property type="entry name" value="50S ribosomal protein L9"/>
    <property type="match status" value="1"/>
</dbReference>
<dbReference type="Gene3D" id="3.10.430.100">
    <property type="entry name" value="Ribosomal protein L9, C-terminal domain"/>
    <property type="match status" value="1"/>
</dbReference>
<dbReference type="Gene3D" id="3.40.5.10">
    <property type="entry name" value="Ribosomal protein L9, N-terminal domain"/>
    <property type="match status" value="1"/>
</dbReference>
<dbReference type="HAMAP" id="MF_00503">
    <property type="entry name" value="Ribosomal_bL9"/>
    <property type="match status" value="1"/>
</dbReference>
<dbReference type="InterPro" id="IPR000244">
    <property type="entry name" value="Ribosomal_bL9"/>
</dbReference>
<dbReference type="InterPro" id="IPR009027">
    <property type="entry name" value="Ribosomal_bL9/RNase_H1_N"/>
</dbReference>
<dbReference type="InterPro" id="IPR020594">
    <property type="entry name" value="Ribosomal_bL9_bac/chp"/>
</dbReference>
<dbReference type="InterPro" id="IPR020069">
    <property type="entry name" value="Ribosomal_bL9_C"/>
</dbReference>
<dbReference type="InterPro" id="IPR036791">
    <property type="entry name" value="Ribosomal_bL9_C_sf"/>
</dbReference>
<dbReference type="InterPro" id="IPR020070">
    <property type="entry name" value="Ribosomal_bL9_N"/>
</dbReference>
<dbReference type="InterPro" id="IPR036935">
    <property type="entry name" value="Ribosomal_bL9_N_sf"/>
</dbReference>
<dbReference type="NCBIfam" id="TIGR00158">
    <property type="entry name" value="L9"/>
    <property type="match status" value="1"/>
</dbReference>
<dbReference type="PANTHER" id="PTHR21368">
    <property type="entry name" value="50S RIBOSOMAL PROTEIN L9"/>
    <property type="match status" value="1"/>
</dbReference>
<dbReference type="Pfam" id="PF03948">
    <property type="entry name" value="Ribosomal_L9_C"/>
    <property type="match status" value="1"/>
</dbReference>
<dbReference type="Pfam" id="PF01281">
    <property type="entry name" value="Ribosomal_L9_N"/>
    <property type="match status" value="1"/>
</dbReference>
<dbReference type="SUPFAM" id="SSF55658">
    <property type="entry name" value="L9 N-domain-like"/>
    <property type="match status" value="1"/>
</dbReference>
<dbReference type="SUPFAM" id="SSF55653">
    <property type="entry name" value="Ribosomal protein L9 C-domain"/>
    <property type="match status" value="1"/>
</dbReference>
<dbReference type="PROSITE" id="PS00651">
    <property type="entry name" value="RIBOSOMAL_L9"/>
    <property type="match status" value="1"/>
</dbReference>
<reference key="1">
    <citation type="journal article" date="2003" name="Proc. Natl. Acad. Sci. U.S.A.">
        <title>The complete genome sequence of Mycobacterium bovis.</title>
        <authorList>
            <person name="Garnier T."/>
            <person name="Eiglmeier K."/>
            <person name="Camus J.-C."/>
            <person name="Medina N."/>
            <person name="Mansoor H."/>
            <person name="Pryor M."/>
            <person name="Duthoy S."/>
            <person name="Grondin S."/>
            <person name="Lacroix C."/>
            <person name="Monsempe C."/>
            <person name="Simon S."/>
            <person name="Harris B."/>
            <person name="Atkin R."/>
            <person name="Doggett J."/>
            <person name="Mayes R."/>
            <person name="Keating L."/>
            <person name="Wheeler P.R."/>
            <person name="Parkhill J."/>
            <person name="Barrell B.G."/>
            <person name="Cole S.T."/>
            <person name="Gordon S.V."/>
            <person name="Hewinson R.G."/>
        </authorList>
    </citation>
    <scope>NUCLEOTIDE SEQUENCE [LARGE SCALE GENOMIC DNA]</scope>
    <source>
        <strain>ATCC BAA-935 / AF2122/97</strain>
    </source>
</reference>
<reference key="2">
    <citation type="journal article" date="2017" name="Genome Announc.">
        <title>Updated reference genome sequence and annotation of Mycobacterium bovis AF2122/97.</title>
        <authorList>
            <person name="Malone K.M."/>
            <person name="Farrell D."/>
            <person name="Stuber T.P."/>
            <person name="Schubert O.T."/>
            <person name="Aebersold R."/>
            <person name="Robbe-Austerman S."/>
            <person name="Gordon S.V."/>
        </authorList>
    </citation>
    <scope>NUCLEOTIDE SEQUENCE [LARGE SCALE GENOMIC DNA]</scope>
    <scope>GENOME REANNOTATION</scope>
    <source>
        <strain>ATCC BAA-935 / AF2122/97</strain>
    </source>
</reference>